<keyword id="KW-0025">Alternative splicing</keyword>
<keyword id="KW-0238">DNA-binding</keyword>
<keyword id="KW-1017">Isopeptide bond</keyword>
<keyword id="KW-0479">Metal-binding</keyword>
<keyword id="KW-0539">Nucleus</keyword>
<keyword id="KW-1267">Proteomics identification</keyword>
<keyword id="KW-1185">Reference proteome</keyword>
<keyword id="KW-0677">Repeat</keyword>
<keyword id="KW-0804">Transcription</keyword>
<keyword id="KW-0805">Transcription regulation</keyword>
<keyword id="KW-0832">Ubl conjugation</keyword>
<keyword id="KW-0862">Zinc</keyword>
<keyword id="KW-0863">Zinc-finger</keyword>
<sequence length="462" mass="53489">MLCDEEAQKRKAKESGMALPQGRLTFMDVAIEFSQEEWKSLDPGQRALYRDVMLENYRNLVFLGICLPDLSIISMLKQRREPLILQSQVKIVKNTDGRECVRSVNTGRSCVLGSNAENKPIKNQLGLTLEAHLSELQLFQAGRKIYRSNQVEKFTNHRSSVSPLQKISSSFTTHIFNKYRNDLIDFPLLPQEEKAYIRGKSYEYECSEDGEVFRVRASLTNHQVIHTAEKPYKCTECGKVFSRNSHLVEHWRIHTGQKPYKCSECDKVFNRNSNLARHQRIHTGEKPHKCNECGKAFRECSGLTTHLVIHTGEKPYKCNECGKNFRHKFSLTNHQRSHTAEKPYKCNECGKVFSLLSYLARHQIIHSTEKPYKCNECGRAFHKRPGLMAHLLIHTGEKPYKCNECDKVFGRKLYLTNHQRIHTGERPYKCNACGKVFNQNPHLSRHRKIHAGENSLRTLQME</sequence>
<comment type="function">
    <text>May be involved in transcriptional regulation.</text>
</comment>
<comment type="subcellular location">
    <subcellularLocation>
        <location evidence="8">Nucleus</location>
    </subcellularLocation>
</comment>
<comment type="alternative products">
    <event type="alternative splicing"/>
    <isoform>
        <id>Q8N9Z0-1</id>
        <name>1</name>
        <sequence type="displayed"/>
    </isoform>
    <isoform>
        <id>Q8N9Z0-2</id>
        <name>2</name>
        <sequence type="described" ref="VSP_018387"/>
    </isoform>
</comment>
<comment type="similarity">
    <text evidence="8">Belongs to the krueppel C2H2-type zinc-finger protein family.</text>
</comment>
<reference key="1">
    <citation type="journal article" date="2004" name="Nat. Genet.">
        <title>Complete sequencing and characterization of 21,243 full-length human cDNAs.</title>
        <authorList>
            <person name="Ota T."/>
            <person name="Suzuki Y."/>
            <person name="Nishikawa T."/>
            <person name="Otsuki T."/>
            <person name="Sugiyama T."/>
            <person name="Irie R."/>
            <person name="Wakamatsu A."/>
            <person name="Hayashi K."/>
            <person name="Sato H."/>
            <person name="Nagai K."/>
            <person name="Kimura K."/>
            <person name="Makita H."/>
            <person name="Sekine M."/>
            <person name="Obayashi M."/>
            <person name="Nishi T."/>
            <person name="Shibahara T."/>
            <person name="Tanaka T."/>
            <person name="Ishii S."/>
            <person name="Yamamoto J."/>
            <person name="Saito K."/>
            <person name="Kawai Y."/>
            <person name="Isono Y."/>
            <person name="Nakamura Y."/>
            <person name="Nagahari K."/>
            <person name="Murakami K."/>
            <person name="Yasuda T."/>
            <person name="Iwayanagi T."/>
            <person name="Wagatsuma M."/>
            <person name="Shiratori A."/>
            <person name="Sudo H."/>
            <person name="Hosoiri T."/>
            <person name="Kaku Y."/>
            <person name="Kodaira H."/>
            <person name="Kondo H."/>
            <person name="Sugawara M."/>
            <person name="Takahashi M."/>
            <person name="Kanda K."/>
            <person name="Yokoi T."/>
            <person name="Furuya T."/>
            <person name="Kikkawa E."/>
            <person name="Omura Y."/>
            <person name="Abe K."/>
            <person name="Kamihara K."/>
            <person name="Katsuta N."/>
            <person name="Sato K."/>
            <person name="Tanikawa M."/>
            <person name="Yamazaki M."/>
            <person name="Ninomiya K."/>
            <person name="Ishibashi T."/>
            <person name="Yamashita H."/>
            <person name="Murakawa K."/>
            <person name="Fujimori K."/>
            <person name="Tanai H."/>
            <person name="Kimata M."/>
            <person name="Watanabe M."/>
            <person name="Hiraoka S."/>
            <person name="Chiba Y."/>
            <person name="Ishida S."/>
            <person name="Ono Y."/>
            <person name="Takiguchi S."/>
            <person name="Watanabe S."/>
            <person name="Yosida M."/>
            <person name="Hotuta T."/>
            <person name="Kusano J."/>
            <person name="Kanehori K."/>
            <person name="Takahashi-Fujii A."/>
            <person name="Hara H."/>
            <person name="Tanase T.-O."/>
            <person name="Nomura Y."/>
            <person name="Togiya S."/>
            <person name="Komai F."/>
            <person name="Hara R."/>
            <person name="Takeuchi K."/>
            <person name="Arita M."/>
            <person name="Imose N."/>
            <person name="Musashino K."/>
            <person name="Yuuki H."/>
            <person name="Oshima A."/>
            <person name="Sasaki N."/>
            <person name="Aotsuka S."/>
            <person name="Yoshikawa Y."/>
            <person name="Matsunawa H."/>
            <person name="Ichihara T."/>
            <person name="Shiohata N."/>
            <person name="Sano S."/>
            <person name="Moriya S."/>
            <person name="Momiyama H."/>
            <person name="Satoh N."/>
            <person name="Takami S."/>
            <person name="Terashima Y."/>
            <person name="Suzuki O."/>
            <person name="Nakagawa S."/>
            <person name="Senoh A."/>
            <person name="Mizoguchi H."/>
            <person name="Goto Y."/>
            <person name="Shimizu F."/>
            <person name="Wakebe H."/>
            <person name="Hishigaki H."/>
            <person name="Watanabe T."/>
            <person name="Sugiyama A."/>
            <person name="Takemoto M."/>
            <person name="Kawakami B."/>
            <person name="Yamazaki M."/>
            <person name="Watanabe K."/>
            <person name="Kumagai A."/>
            <person name="Itakura S."/>
            <person name="Fukuzumi Y."/>
            <person name="Fujimori Y."/>
            <person name="Komiyama M."/>
            <person name="Tashiro H."/>
            <person name="Tanigami A."/>
            <person name="Fujiwara T."/>
            <person name="Ono T."/>
            <person name="Yamada K."/>
            <person name="Fujii Y."/>
            <person name="Ozaki K."/>
            <person name="Hirao M."/>
            <person name="Ohmori Y."/>
            <person name="Kawabata A."/>
            <person name="Hikiji T."/>
            <person name="Kobatake N."/>
            <person name="Inagaki H."/>
            <person name="Ikema Y."/>
            <person name="Okamoto S."/>
            <person name="Okitani R."/>
            <person name="Kawakami T."/>
            <person name="Noguchi S."/>
            <person name="Itoh T."/>
            <person name="Shigeta K."/>
            <person name="Senba T."/>
            <person name="Matsumura K."/>
            <person name="Nakajima Y."/>
            <person name="Mizuno T."/>
            <person name="Morinaga M."/>
            <person name="Sasaki M."/>
            <person name="Togashi T."/>
            <person name="Oyama M."/>
            <person name="Hata H."/>
            <person name="Watanabe M."/>
            <person name="Komatsu T."/>
            <person name="Mizushima-Sugano J."/>
            <person name="Satoh T."/>
            <person name="Shirai Y."/>
            <person name="Takahashi Y."/>
            <person name="Nakagawa K."/>
            <person name="Okumura K."/>
            <person name="Nagase T."/>
            <person name="Nomura N."/>
            <person name="Kikuchi H."/>
            <person name="Masuho Y."/>
            <person name="Yamashita R."/>
            <person name="Nakai K."/>
            <person name="Yada T."/>
            <person name="Nakamura Y."/>
            <person name="Ohara O."/>
            <person name="Isogai T."/>
            <person name="Sugano S."/>
        </authorList>
    </citation>
    <scope>NUCLEOTIDE SEQUENCE [LARGE SCALE MRNA] (ISOFORM 1)</scope>
    <scope>VARIANTS SER-131 AND PRO-216</scope>
    <source>
        <tissue>Testis</tissue>
    </source>
</reference>
<reference key="2">
    <citation type="journal article" date="2004" name="Nature">
        <title>The DNA sequence and biology of human chromosome 19.</title>
        <authorList>
            <person name="Grimwood J."/>
            <person name="Gordon L.A."/>
            <person name="Olsen A.S."/>
            <person name="Terry A."/>
            <person name="Schmutz J."/>
            <person name="Lamerdin J.E."/>
            <person name="Hellsten U."/>
            <person name="Goodstein D."/>
            <person name="Couronne O."/>
            <person name="Tran-Gyamfi M."/>
            <person name="Aerts A."/>
            <person name="Altherr M."/>
            <person name="Ashworth L."/>
            <person name="Bajorek E."/>
            <person name="Black S."/>
            <person name="Branscomb E."/>
            <person name="Caenepeel S."/>
            <person name="Carrano A.V."/>
            <person name="Caoile C."/>
            <person name="Chan Y.M."/>
            <person name="Christensen M."/>
            <person name="Cleland C.A."/>
            <person name="Copeland A."/>
            <person name="Dalin E."/>
            <person name="Dehal P."/>
            <person name="Denys M."/>
            <person name="Detter J.C."/>
            <person name="Escobar J."/>
            <person name="Flowers D."/>
            <person name="Fotopulos D."/>
            <person name="Garcia C."/>
            <person name="Georgescu A.M."/>
            <person name="Glavina T."/>
            <person name="Gomez M."/>
            <person name="Gonzales E."/>
            <person name="Groza M."/>
            <person name="Hammon N."/>
            <person name="Hawkins T."/>
            <person name="Haydu L."/>
            <person name="Ho I."/>
            <person name="Huang W."/>
            <person name="Israni S."/>
            <person name="Jett J."/>
            <person name="Kadner K."/>
            <person name="Kimball H."/>
            <person name="Kobayashi A."/>
            <person name="Larionov V."/>
            <person name="Leem S.-H."/>
            <person name="Lopez F."/>
            <person name="Lou Y."/>
            <person name="Lowry S."/>
            <person name="Malfatti S."/>
            <person name="Martinez D."/>
            <person name="McCready P.M."/>
            <person name="Medina C."/>
            <person name="Morgan J."/>
            <person name="Nelson K."/>
            <person name="Nolan M."/>
            <person name="Ovcharenko I."/>
            <person name="Pitluck S."/>
            <person name="Pollard M."/>
            <person name="Popkie A.P."/>
            <person name="Predki P."/>
            <person name="Quan G."/>
            <person name="Ramirez L."/>
            <person name="Rash S."/>
            <person name="Retterer J."/>
            <person name="Rodriguez A."/>
            <person name="Rogers S."/>
            <person name="Salamov A."/>
            <person name="Salazar A."/>
            <person name="She X."/>
            <person name="Smith D."/>
            <person name="Slezak T."/>
            <person name="Solovyev V."/>
            <person name="Thayer N."/>
            <person name="Tice H."/>
            <person name="Tsai M."/>
            <person name="Ustaszewska A."/>
            <person name="Vo N."/>
            <person name="Wagner M."/>
            <person name="Wheeler J."/>
            <person name="Wu K."/>
            <person name="Xie G."/>
            <person name="Yang J."/>
            <person name="Dubchak I."/>
            <person name="Furey T.S."/>
            <person name="DeJong P."/>
            <person name="Dickson M."/>
            <person name="Gordon D."/>
            <person name="Eichler E.E."/>
            <person name="Pennacchio L.A."/>
            <person name="Richardson P."/>
            <person name="Stubbs L."/>
            <person name="Rokhsar D.S."/>
            <person name="Myers R.M."/>
            <person name="Rubin E.M."/>
            <person name="Lucas S.M."/>
        </authorList>
    </citation>
    <scope>NUCLEOTIDE SEQUENCE [LARGE SCALE GENOMIC DNA]</scope>
    <scope>VARIANT SER-131</scope>
</reference>
<reference key="3">
    <citation type="journal article" date="2004" name="Genome Res.">
        <title>The status, quality, and expansion of the NIH full-length cDNA project: the Mammalian Gene Collection (MGC).</title>
        <authorList>
            <consortium name="The MGC Project Team"/>
        </authorList>
    </citation>
    <scope>NUCLEOTIDE SEQUENCE [LARGE SCALE MRNA] (ISOFORMS 1 AND 2)</scope>
    <scope>VARIANT PRO-216</scope>
    <source>
        <tissue>Eye</tissue>
        <tissue>Skin</tissue>
    </source>
</reference>
<reference key="4">
    <citation type="journal article" date="2007" name="BMC Genomics">
        <title>The full-ORF clone resource of the German cDNA consortium.</title>
        <authorList>
            <person name="Bechtel S."/>
            <person name="Rosenfelder H."/>
            <person name="Duda A."/>
            <person name="Schmidt C.P."/>
            <person name="Ernst U."/>
            <person name="Wellenreuther R."/>
            <person name="Mehrle A."/>
            <person name="Schuster C."/>
            <person name="Bahr A."/>
            <person name="Bloecker H."/>
            <person name="Heubner D."/>
            <person name="Hoerlein A."/>
            <person name="Michel G."/>
            <person name="Wedler H."/>
            <person name="Koehrer K."/>
            <person name="Ottenwaelder B."/>
            <person name="Poustka A."/>
            <person name="Wiemann S."/>
            <person name="Schupp I."/>
        </authorList>
    </citation>
    <scope>NUCLEOTIDE SEQUENCE [LARGE SCALE MRNA] OF 247-462</scope>
    <source>
        <tissue>Brain</tissue>
    </source>
</reference>
<feature type="chain" id="PRO_0000234595" description="Zinc finger protein 610">
    <location>
        <begin position="1"/>
        <end position="462"/>
    </location>
</feature>
<feature type="domain" description="KRAB" evidence="3">
    <location>
        <begin position="24"/>
        <end position="95"/>
    </location>
</feature>
<feature type="zinc finger region" description="C2H2-type 1; degenerate" evidence="2">
    <location>
        <begin position="204"/>
        <end position="226"/>
    </location>
</feature>
<feature type="zinc finger region" description="C2H2-type 2" evidence="2">
    <location>
        <begin position="232"/>
        <end position="254"/>
    </location>
</feature>
<feature type="zinc finger region" description="C2H2-type 3" evidence="2">
    <location>
        <begin position="260"/>
        <end position="282"/>
    </location>
</feature>
<feature type="zinc finger region" description="C2H2-type 4" evidence="2">
    <location>
        <begin position="288"/>
        <end position="310"/>
    </location>
</feature>
<feature type="zinc finger region" description="C2H2-type 5" evidence="2">
    <location>
        <begin position="316"/>
        <end position="338"/>
    </location>
</feature>
<feature type="zinc finger region" description="C2H2-type 6" evidence="2">
    <location>
        <begin position="344"/>
        <end position="366"/>
    </location>
</feature>
<feature type="zinc finger region" description="C2H2-type 7" evidence="2">
    <location>
        <begin position="372"/>
        <end position="394"/>
    </location>
</feature>
<feature type="zinc finger region" description="C2H2-type 8" evidence="2">
    <location>
        <begin position="400"/>
        <end position="422"/>
    </location>
</feature>
<feature type="zinc finger region" description="C2H2-type 9" evidence="2">
    <location>
        <begin position="428"/>
        <end position="450"/>
    </location>
</feature>
<feature type="cross-link" description="Glycyl lysine isopeptide (Lys-Gly) (interchain with G-Cter in SUMO2)" evidence="1">
    <location>
        <position position="119"/>
    </location>
</feature>
<feature type="cross-link" description="Glycyl lysine isopeptide (Lys-Gly) (interchain with G-Cter in SUMO2)" evidence="1">
    <location>
        <position position="122"/>
    </location>
</feature>
<feature type="cross-link" description="Glycyl lysine isopeptide (Lys-Gly) (interchain with G-Cter in SUMO2)" evidence="1">
    <location>
        <position position="194"/>
    </location>
</feature>
<feature type="splice variant" id="VSP_018387" description="In isoform 2." evidence="7">
    <location>
        <begin position="65"/>
        <end position="107"/>
    </location>
</feature>
<feature type="sequence variant" id="VAR_052873" description="In dbSNP:rs3815905.">
    <original>V</original>
    <variation>M</variation>
    <location>
        <position position="104"/>
    </location>
</feature>
<feature type="sequence variant" id="VAR_052874" description="In dbSNP:rs2241586." evidence="4 5">
    <original>A</original>
    <variation>S</variation>
    <location>
        <position position="131"/>
    </location>
</feature>
<feature type="sequence variant" id="VAR_033582" description="In dbSNP:rs321937." evidence="4 6">
    <original>R</original>
    <variation>P</variation>
    <location>
        <position position="216"/>
    </location>
</feature>
<feature type="sequence variant" id="VAR_052875" description="In dbSNP:rs7343101.">
    <original>R</original>
    <variation>I</variation>
    <location>
        <position position="298"/>
    </location>
</feature>
<organism>
    <name type="scientific">Homo sapiens</name>
    <name type="common">Human</name>
    <dbReference type="NCBI Taxonomy" id="9606"/>
    <lineage>
        <taxon>Eukaryota</taxon>
        <taxon>Metazoa</taxon>
        <taxon>Chordata</taxon>
        <taxon>Craniata</taxon>
        <taxon>Vertebrata</taxon>
        <taxon>Euteleostomi</taxon>
        <taxon>Mammalia</taxon>
        <taxon>Eutheria</taxon>
        <taxon>Euarchontoglires</taxon>
        <taxon>Primates</taxon>
        <taxon>Haplorrhini</taxon>
        <taxon>Catarrhini</taxon>
        <taxon>Hominidae</taxon>
        <taxon>Homo</taxon>
    </lineage>
</organism>
<protein>
    <recommendedName>
        <fullName>Zinc finger protein 610</fullName>
    </recommendedName>
</protein>
<proteinExistence type="evidence at protein level"/>
<name>ZN610_HUMAN</name>
<accession>Q8N9Z0</accession>
<accession>A8K4C3</accession>
<accession>Q86YH8</accession>
<accession>Q8NDS9</accession>
<gene>
    <name type="primary">ZNF610</name>
</gene>
<dbReference type="EMBL" id="AK290888">
    <property type="protein sequence ID" value="BAF83577.1"/>
    <property type="molecule type" value="mRNA"/>
</dbReference>
<dbReference type="EMBL" id="AK093359">
    <property type="protein sequence ID" value="BAC04144.1"/>
    <property type="molecule type" value="mRNA"/>
</dbReference>
<dbReference type="EMBL" id="AC010320">
    <property type="status" value="NOT_ANNOTATED_CDS"/>
    <property type="molecule type" value="Genomic_DNA"/>
</dbReference>
<dbReference type="EMBL" id="BC039903">
    <property type="protein sequence ID" value="AAH39903.1"/>
    <property type="molecule type" value="mRNA"/>
</dbReference>
<dbReference type="EMBL" id="BC105967">
    <property type="protein sequence ID" value="AAI05968.1"/>
    <property type="molecule type" value="mRNA"/>
</dbReference>
<dbReference type="EMBL" id="AL831871">
    <property type="protein sequence ID" value="CAD38559.1"/>
    <property type="molecule type" value="mRNA"/>
</dbReference>
<dbReference type="CCDS" id="CCDS12851.1">
    <molecule id="Q8N9Z0-1"/>
</dbReference>
<dbReference type="CCDS" id="CCDS54309.1">
    <molecule id="Q8N9Z0-2"/>
</dbReference>
<dbReference type="RefSeq" id="NP_001154897.1">
    <molecule id="Q8N9Z0-1"/>
    <property type="nucleotide sequence ID" value="NM_001161425.2"/>
</dbReference>
<dbReference type="RefSeq" id="NP_001154898.1">
    <molecule id="Q8N9Z0-1"/>
    <property type="nucleotide sequence ID" value="NM_001161426.2"/>
</dbReference>
<dbReference type="RefSeq" id="NP_001154899.1">
    <molecule id="Q8N9Z0-2"/>
    <property type="nucleotide sequence ID" value="NM_001161427.2"/>
</dbReference>
<dbReference type="RefSeq" id="NP_775801.2">
    <molecule id="Q8N9Z0-1"/>
    <property type="nucleotide sequence ID" value="NM_173530.3"/>
</dbReference>
<dbReference type="RefSeq" id="XP_047294240.1">
    <molecule id="Q8N9Z0-1"/>
    <property type="nucleotide sequence ID" value="XM_047438284.1"/>
</dbReference>
<dbReference type="RefSeq" id="XP_047294241.1">
    <molecule id="Q8N9Z0-1"/>
    <property type="nucleotide sequence ID" value="XM_047438285.1"/>
</dbReference>
<dbReference type="RefSeq" id="XP_047294242.1">
    <molecule id="Q8N9Z0-1"/>
    <property type="nucleotide sequence ID" value="XM_047438286.1"/>
</dbReference>
<dbReference type="RefSeq" id="XP_047294243.1">
    <molecule id="Q8N9Z0-1"/>
    <property type="nucleotide sequence ID" value="XM_047438287.1"/>
</dbReference>
<dbReference type="SMR" id="Q8N9Z0"/>
<dbReference type="BioGRID" id="127832">
    <property type="interactions" value="8"/>
</dbReference>
<dbReference type="FunCoup" id="Q8N9Z0">
    <property type="interactions" value="28"/>
</dbReference>
<dbReference type="IntAct" id="Q8N9Z0">
    <property type="interactions" value="5"/>
</dbReference>
<dbReference type="STRING" id="9606.ENSP00000383922"/>
<dbReference type="iPTMnet" id="Q8N9Z0"/>
<dbReference type="PhosphoSitePlus" id="Q8N9Z0"/>
<dbReference type="BioMuta" id="ZNF610"/>
<dbReference type="DMDM" id="229462790"/>
<dbReference type="jPOST" id="Q8N9Z0"/>
<dbReference type="MassIVE" id="Q8N9Z0"/>
<dbReference type="PaxDb" id="9606-ENSP00000383922"/>
<dbReference type="PeptideAtlas" id="Q8N9Z0"/>
<dbReference type="ProteomicsDB" id="72610">
    <molecule id="Q8N9Z0-1"/>
</dbReference>
<dbReference type="ProteomicsDB" id="72611">
    <molecule id="Q8N9Z0-2"/>
</dbReference>
<dbReference type="Antibodypedia" id="19097">
    <property type="antibodies" value="81 antibodies from 17 providers"/>
</dbReference>
<dbReference type="DNASU" id="162963"/>
<dbReference type="Ensembl" id="ENST00000321287.12">
    <molecule id="Q8N9Z0-1"/>
    <property type="protein sequence ID" value="ENSP00000324441.8"/>
    <property type="gene ID" value="ENSG00000167554.15"/>
</dbReference>
<dbReference type="Ensembl" id="ENST00000327920.12">
    <molecule id="Q8N9Z0-1"/>
    <property type="protein sequence ID" value="ENSP00000327597.7"/>
    <property type="gene ID" value="ENSG00000167554.15"/>
</dbReference>
<dbReference type="Ensembl" id="ENST00000403906.8">
    <molecule id="Q8N9Z0-1"/>
    <property type="protein sequence ID" value="ENSP00000383922.2"/>
    <property type="gene ID" value="ENSG00000167554.15"/>
</dbReference>
<dbReference type="Ensembl" id="ENST00000601151.5">
    <molecule id="Q8N9Z0-2"/>
    <property type="protein sequence ID" value="ENSP00000471021.1"/>
    <property type="gene ID" value="ENSG00000167554.15"/>
</dbReference>
<dbReference type="Ensembl" id="ENST00000613461.3">
    <molecule id="Q8N9Z0-2"/>
    <property type="protein sequence ID" value="ENSP00000477617.1"/>
    <property type="gene ID" value="ENSG00000167554.15"/>
</dbReference>
<dbReference type="Ensembl" id="ENST00000616431.2">
    <molecule id="Q8N9Z0-1"/>
    <property type="protein sequence ID" value="ENSP00000485001.1"/>
    <property type="gene ID" value="ENSG00000167554.15"/>
</dbReference>
<dbReference type="GeneID" id="162963"/>
<dbReference type="KEGG" id="hsa:162963"/>
<dbReference type="MANE-Select" id="ENST00000403906.8">
    <property type="protein sequence ID" value="ENSP00000383922.2"/>
    <property type="RefSeq nucleotide sequence ID" value="NM_001161425.2"/>
    <property type="RefSeq protein sequence ID" value="NP_001154897.1"/>
</dbReference>
<dbReference type="UCSC" id="uc002pyx.5">
    <molecule id="Q8N9Z0-1"/>
    <property type="organism name" value="human"/>
</dbReference>
<dbReference type="AGR" id="HGNC:26687"/>
<dbReference type="CTD" id="162963"/>
<dbReference type="DisGeNET" id="162963"/>
<dbReference type="GeneCards" id="ZNF610"/>
<dbReference type="HGNC" id="HGNC:26687">
    <property type="gene designation" value="ZNF610"/>
</dbReference>
<dbReference type="HPA" id="ENSG00000167554">
    <property type="expression patterns" value="Low tissue specificity"/>
</dbReference>
<dbReference type="neXtProt" id="NX_Q8N9Z0"/>
<dbReference type="OpenTargets" id="ENSG00000167554"/>
<dbReference type="PharmGKB" id="PA134963099"/>
<dbReference type="VEuPathDB" id="HostDB:ENSG00000167554"/>
<dbReference type="eggNOG" id="KOG1721">
    <property type="taxonomic scope" value="Eukaryota"/>
</dbReference>
<dbReference type="GeneTree" id="ENSGT00940000163746"/>
<dbReference type="HOGENOM" id="CLU_002678_0_7_1"/>
<dbReference type="InParanoid" id="Q8N9Z0"/>
<dbReference type="OMA" id="NYSEIFI"/>
<dbReference type="OrthoDB" id="654211at2759"/>
<dbReference type="PAN-GO" id="Q8N9Z0">
    <property type="GO annotations" value="4 GO annotations based on evolutionary models"/>
</dbReference>
<dbReference type="PhylomeDB" id="Q8N9Z0"/>
<dbReference type="TreeFam" id="TF341892"/>
<dbReference type="PathwayCommons" id="Q8N9Z0"/>
<dbReference type="Reactome" id="R-HSA-212436">
    <property type="pathway name" value="Generic Transcription Pathway"/>
</dbReference>
<dbReference type="Reactome" id="R-HSA-9843940">
    <property type="pathway name" value="Regulation of endogenous retroelements by KRAB-ZFP proteins"/>
</dbReference>
<dbReference type="SignaLink" id="Q8N9Z0"/>
<dbReference type="BioGRID-ORCS" id="162963">
    <property type="hits" value="13 hits in 1169 CRISPR screens"/>
</dbReference>
<dbReference type="ChiTaRS" id="ZNF610">
    <property type="organism name" value="human"/>
</dbReference>
<dbReference type="GenomeRNAi" id="162963"/>
<dbReference type="Pharos" id="Q8N9Z0">
    <property type="development level" value="Tdark"/>
</dbReference>
<dbReference type="PRO" id="PR:Q8N9Z0"/>
<dbReference type="Proteomes" id="UP000005640">
    <property type="component" value="Chromosome 19"/>
</dbReference>
<dbReference type="RNAct" id="Q8N9Z0">
    <property type="molecule type" value="protein"/>
</dbReference>
<dbReference type="Bgee" id="ENSG00000167554">
    <property type="expression patterns" value="Expressed in oocyte and 129 other cell types or tissues"/>
</dbReference>
<dbReference type="ExpressionAtlas" id="Q8N9Z0">
    <property type="expression patterns" value="baseline and differential"/>
</dbReference>
<dbReference type="GO" id="GO:0005634">
    <property type="term" value="C:nucleus"/>
    <property type="evidence" value="ECO:0000318"/>
    <property type="project" value="GO_Central"/>
</dbReference>
<dbReference type="GO" id="GO:0000981">
    <property type="term" value="F:DNA-binding transcription factor activity, RNA polymerase II-specific"/>
    <property type="evidence" value="ECO:0000318"/>
    <property type="project" value="GO_Central"/>
</dbReference>
<dbReference type="GO" id="GO:0000978">
    <property type="term" value="F:RNA polymerase II cis-regulatory region sequence-specific DNA binding"/>
    <property type="evidence" value="ECO:0000318"/>
    <property type="project" value="GO_Central"/>
</dbReference>
<dbReference type="GO" id="GO:0008270">
    <property type="term" value="F:zinc ion binding"/>
    <property type="evidence" value="ECO:0007669"/>
    <property type="project" value="UniProtKB-KW"/>
</dbReference>
<dbReference type="GO" id="GO:0006357">
    <property type="term" value="P:regulation of transcription by RNA polymerase II"/>
    <property type="evidence" value="ECO:0000318"/>
    <property type="project" value="GO_Central"/>
</dbReference>
<dbReference type="CDD" id="cd07765">
    <property type="entry name" value="KRAB_A-box"/>
    <property type="match status" value="1"/>
</dbReference>
<dbReference type="FunFam" id="3.30.160.60:FF:000380">
    <property type="entry name" value="zinc finger protein 2 isoform X2"/>
    <property type="match status" value="2"/>
</dbReference>
<dbReference type="FunFam" id="3.30.160.60:FF:000016">
    <property type="entry name" value="zinc finger protein 37 homolog"/>
    <property type="match status" value="2"/>
</dbReference>
<dbReference type="FunFam" id="3.30.160.60:FF:002090">
    <property type="entry name" value="Zinc finger protein 473"/>
    <property type="match status" value="1"/>
</dbReference>
<dbReference type="FunFam" id="3.30.160.60:FF:000281">
    <property type="entry name" value="Zinc finger protein 558 isoform X1"/>
    <property type="match status" value="1"/>
</dbReference>
<dbReference type="FunFam" id="3.30.160.60:FF:000394">
    <property type="entry name" value="Zinc finger protein 836"/>
    <property type="match status" value="2"/>
</dbReference>
<dbReference type="Gene3D" id="6.10.140.140">
    <property type="match status" value="1"/>
</dbReference>
<dbReference type="Gene3D" id="3.30.160.60">
    <property type="entry name" value="Classic Zinc Finger"/>
    <property type="match status" value="9"/>
</dbReference>
<dbReference type="InterPro" id="IPR001909">
    <property type="entry name" value="KRAB"/>
</dbReference>
<dbReference type="InterPro" id="IPR036051">
    <property type="entry name" value="KRAB_dom_sf"/>
</dbReference>
<dbReference type="InterPro" id="IPR036236">
    <property type="entry name" value="Znf_C2H2_sf"/>
</dbReference>
<dbReference type="InterPro" id="IPR013087">
    <property type="entry name" value="Znf_C2H2_type"/>
</dbReference>
<dbReference type="PANTHER" id="PTHR23235:SF178">
    <property type="entry name" value="C2H2-TYPE DOMAIN-CONTAINING PROTEIN-RELATED"/>
    <property type="match status" value="1"/>
</dbReference>
<dbReference type="PANTHER" id="PTHR23235">
    <property type="entry name" value="KRUEPPEL-LIKE TRANSCRIPTION FACTOR"/>
    <property type="match status" value="1"/>
</dbReference>
<dbReference type="Pfam" id="PF01352">
    <property type="entry name" value="KRAB"/>
    <property type="match status" value="1"/>
</dbReference>
<dbReference type="Pfam" id="PF00096">
    <property type="entry name" value="zf-C2H2"/>
    <property type="match status" value="6"/>
</dbReference>
<dbReference type="Pfam" id="PF13465">
    <property type="entry name" value="zf-H2C2_2"/>
    <property type="match status" value="1"/>
</dbReference>
<dbReference type="SMART" id="SM00349">
    <property type="entry name" value="KRAB"/>
    <property type="match status" value="1"/>
</dbReference>
<dbReference type="SMART" id="SM00355">
    <property type="entry name" value="ZnF_C2H2"/>
    <property type="match status" value="9"/>
</dbReference>
<dbReference type="SUPFAM" id="SSF57667">
    <property type="entry name" value="beta-beta-alpha zinc fingers"/>
    <property type="match status" value="5"/>
</dbReference>
<dbReference type="SUPFAM" id="SSF109640">
    <property type="entry name" value="KRAB domain (Kruppel-associated box)"/>
    <property type="match status" value="1"/>
</dbReference>
<dbReference type="PROSITE" id="PS50805">
    <property type="entry name" value="KRAB"/>
    <property type="match status" value="1"/>
</dbReference>
<dbReference type="PROSITE" id="PS00028">
    <property type="entry name" value="ZINC_FINGER_C2H2_1"/>
    <property type="match status" value="8"/>
</dbReference>
<dbReference type="PROSITE" id="PS50157">
    <property type="entry name" value="ZINC_FINGER_C2H2_2"/>
    <property type="match status" value="9"/>
</dbReference>
<evidence type="ECO:0000250" key="1">
    <source>
        <dbReference type="UniProtKB" id="Q8WV37"/>
    </source>
</evidence>
<evidence type="ECO:0000255" key="2">
    <source>
        <dbReference type="PROSITE-ProRule" id="PRU00042"/>
    </source>
</evidence>
<evidence type="ECO:0000255" key="3">
    <source>
        <dbReference type="PROSITE-ProRule" id="PRU00119"/>
    </source>
</evidence>
<evidence type="ECO:0000269" key="4">
    <source>
    </source>
</evidence>
<evidence type="ECO:0000269" key="5">
    <source>
    </source>
</evidence>
<evidence type="ECO:0000269" key="6">
    <source>
    </source>
</evidence>
<evidence type="ECO:0000303" key="7">
    <source>
    </source>
</evidence>
<evidence type="ECO:0000305" key="8"/>